<feature type="signal peptide" evidence="6">
    <location>
        <begin position="1"/>
        <end position="59"/>
    </location>
</feature>
<feature type="chain" id="PRO_0000003954" description="Protocadherin gamma-A4">
    <location>
        <begin position="60"/>
        <end position="962"/>
    </location>
</feature>
<feature type="topological domain" description="Extracellular" evidence="2">
    <location>
        <begin position="60"/>
        <end position="723"/>
    </location>
</feature>
<feature type="transmembrane region" description="Helical" evidence="2">
    <location>
        <begin position="724"/>
        <end position="744"/>
    </location>
</feature>
<feature type="topological domain" description="Cytoplasmic" evidence="2">
    <location>
        <begin position="745"/>
        <end position="962"/>
    </location>
</feature>
<feature type="domain" description="Cadherin 1" evidence="3">
    <location>
        <begin position="60"/>
        <end position="164"/>
    </location>
</feature>
<feature type="domain" description="Cadherin 2" evidence="3">
    <location>
        <begin position="165"/>
        <end position="273"/>
    </location>
</feature>
<feature type="domain" description="Cadherin 3" evidence="3">
    <location>
        <begin position="274"/>
        <end position="378"/>
    </location>
</feature>
<feature type="domain" description="Cadherin 4" evidence="3">
    <location>
        <begin position="379"/>
        <end position="483"/>
    </location>
</feature>
<feature type="domain" description="Cadherin 5" evidence="3">
    <location>
        <begin position="484"/>
        <end position="598"/>
    </location>
</feature>
<feature type="domain" description="Cadherin 6" evidence="3">
    <location>
        <begin position="601"/>
        <end position="713"/>
    </location>
</feature>
<feature type="region of interest" description="Disordered" evidence="4">
    <location>
        <begin position="1"/>
        <end position="24"/>
    </location>
</feature>
<feature type="region of interest" description="Disordered" evidence="4">
    <location>
        <begin position="832"/>
        <end position="871"/>
    </location>
</feature>
<feature type="region of interest" description="Disordered" evidence="4">
    <location>
        <begin position="932"/>
        <end position="962"/>
    </location>
</feature>
<feature type="compositionally biased region" description="Polar residues" evidence="4">
    <location>
        <begin position="836"/>
        <end position="871"/>
    </location>
</feature>
<feature type="compositionally biased region" description="Basic residues" evidence="4">
    <location>
        <begin position="952"/>
        <end position="962"/>
    </location>
</feature>
<feature type="glycosylation site" description="N-linked (GlcNAc...) asparagine" evidence="2">
    <location>
        <position position="450"/>
    </location>
</feature>
<feature type="glycosylation site" description="N-linked (GlcNAc...) asparagine" evidence="2">
    <location>
        <position position="576"/>
    </location>
</feature>
<feature type="splice variant" id="VSP_008665" description="In isoform 2." evidence="5">
    <original>QAPPNTDWRFSQA</original>
    <variation>VSQSYNRSYHTEI</variation>
    <location>
        <begin position="839"/>
        <end position="851"/>
    </location>
</feature>
<feature type="splice variant" id="VSP_008666" description="In isoform 2." evidence="5">
    <location>
        <begin position="852"/>
        <end position="962"/>
    </location>
</feature>
<feature type="sequence variant" id="VAR_048557" description="In dbSNP:rs11575949.">
    <original>A</original>
    <variation>T</variation>
    <location>
        <position position="181"/>
    </location>
</feature>
<feature type="sequence variant" id="VAR_048558" description="In dbSNP:rs4329068.">
    <original>R</original>
    <variation>K</variation>
    <location>
        <position position="672"/>
    </location>
</feature>
<feature type="sequence variant" id="VAR_048559" description="In dbSNP:rs11575951.">
    <original>D</original>
    <variation>H</variation>
    <location>
        <position position="714"/>
    </location>
</feature>
<protein>
    <recommendedName>
        <fullName>Protocadherin gamma-A4</fullName>
        <shortName>PCDH-gamma-A4</shortName>
    </recommendedName>
</protein>
<reference key="1">
    <citation type="journal article" date="2004" name="Nature">
        <title>The DNA sequence and comparative analysis of human chromosome 5.</title>
        <authorList>
            <person name="Schmutz J."/>
            <person name="Martin J."/>
            <person name="Terry A."/>
            <person name="Couronne O."/>
            <person name="Grimwood J."/>
            <person name="Lowry S."/>
            <person name="Gordon L.A."/>
            <person name="Scott D."/>
            <person name="Xie G."/>
            <person name="Huang W."/>
            <person name="Hellsten U."/>
            <person name="Tran-Gyamfi M."/>
            <person name="She X."/>
            <person name="Prabhakar S."/>
            <person name="Aerts A."/>
            <person name="Altherr M."/>
            <person name="Bajorek E."/>
            <person name="Black S."/>
            <person name="Branscomb E."/>
            <person name="Caoile C."/>
            <person name="Challacombe J.F."/>
            <person name="Chan Y.M."/>
            <person name="Denys M."/>
            <person name="Detter J.C."/>
            <person name="Escobar J."/>
            <person name="Flowers D."/>
            <person name="Fotopulos D."/>
            <person name="Glavina T."/>
            <person name="Gomez M."/>
            <person name="Gonzales E."/>
            <person name="Goodstein D."/>
            <person name="Grigoriev I."/>
            <person name="Groza M."/>
            <person name="Hammon N."/>
            <person name="Hawkins T."/>
            <person name="Haydu L."/>
            <person name="Israni S."/>
            <person name="Jett J."/>
            <person name="Kadner K."/>
            <person name="Kimball H."/>
            <person name="Kobayashi A."/>
            <person name="Lopez F."/>
            <person name="Lou Y."/>
            <person name="Martinez D."/>
            <person name="Medina C."/>
            <person name="Morgan J."/>
            <person name="Nandkeshwar R."/>
            <person name="Noonan J.P."/>
            <person name="Pitluck S."/>
            <person name="Pollard M."/>
            <person name="Predki P."/>
            <person name="Priest J."/>
            <person name="Ramirez L."/>
            <person name="Retterer J."/>
            <person name="Rodriguez A."/>
            <person name="Rogers S."/>
            <person name="Salamov A."/>
            <person name="Salazar A."/>
            <person name="Thayer N."/>
            <person name="Tice H."/>
            <person name="Tsai M."/>
            <person name="Ustaszewska A."/>
            <person name="Vo N."/>
            <person name="Wheeler J."/>
            <person name="Wu K."/>
            <person name="Yang J."/>
            <person name="Dickson M."/>
            <person name="Cheng J.-F."/>
            <person name="Eichler E.E."/>
            <person name="Olsen A."/>
            <person name="Pennacchio L.A."/>
            <person name="Rokhsar D.S."/>
            <person name="Richardson P."/>
            <person name="Lucas S.M."/>
            <person name="Myers R.M."/>
            <person name="Rubin E.M."/>
        </authorList>
    </citation>
    <scope>NUCLEOTIDE SEQUENCE [LARGE SCALE GENOMIC DNA]</scope>
</reference>
<reference key="2">
    <citation type="journal article" date="1999" name="Cell">
        <title>A striking organization of a large family of human neural cadherin-like cell adhesion genes.</title>
        <authorList>
            <person name="Wu Q."/>
            <person name="Maniatis T."/>
        </authorList>
    </citation>
    <scope>NUCLEOTIDE SEQUENCE [MRNA] OF 32-962 (ISOFORMS 1 AND 2)</scope>
    <source>
        <tissue>Brain</tissue>
    </source>
</reference>
<gene>
    <name type="primary">PCDHGA4</name>
</gene>
<evidence type="ECO:0000250" key="1"/>
<evidence type="ECO:0000255" key="2"/>
<evidence type="ECO:0000255" key="3">
    <source>
        <dbReference type="PROSITE-ProRule" id="PRU00043"/>
    </source>
</evidence>
<evidence type="ECO:0000256" key="4">
    <source>
        <dbReference type="SAM" id="MobiDB-lite"/>
    </source>
</evidence>
<evidence type="ECO:0000303" key="5">
    <source>
    </source>
</evidence>
<evidence type="ECO:0000305" key="6"/>
<organism>
    <name type="scientific">Homo sapiens</name>
    <name type="common">Human</name>
    <dbReference type="NCBI Taxonomy" id="9606"/>
    <lineage>
        <taxon>Eukaryota</taxon>
        <taxon>Metazoa</taxon>
        <taxon>Chordata</taxon>
        <taxon>Craniata</taxon>
        <taxon>Vertebrata</taxon>
        <taxon>Euteleostomi</taxon>
        <taxon>Mammalia</taxon>
        <taxon>Eutheria</taxon>
        <taxon>Euarchontoglires</taxon>
        <taxon>Primates</taxon>
        <taxon>Haplorrhini</taxon>
        <taxon>Catarrhini</taxon>
        <taxon>Hominidae</taxon>
        <taxon>Homo</taxon>
    </lineage>
</organism>
<comment type="function">
    <text>Potential calcium-dependent cell-adhesion protein. May be involved in the establishment and maintenance of specific neuronal connections in the brain.</text>
</comment>
<comment type="interaction">
    <interactant intactId="EBI-12956949">
        <id>Q9Y5G9</id>
    </interactant>
    <interactant intactId="EBI-10262547">
        <id>Q8IXM6</id>
        <label>NRM</label>
    </interactant>
    <organismsDiffer>false</organismsDiffer>
    <experiments>3</experiments>
</comment>
<comment type="interaction">
    <interactant intactId="EBI-12956949">
        <id>Q9Y5G9</id>
    </interactant>
    <interactant intactId="EBI-465167">
        <id>P09466</id>
        <label>PAEP</label>
    </interactant>
    <organismsDiffer>false</organismsDiffer>
    <experiments>3</experiments>
</comment>
<comment type="interaction">
    <interactant intactId="EBI-12956949">
        <id>Q9Y5G9</id>
    </interactant>
    <interactant intactId="EBI-347996">
        <id>O43765</id>
        <label>SGTA</label>
    </interactant>
    <organismsDiffer>false</organismsDiffer>
    <experiments>3</experiments>
</comment>
<comment type="subcellular location">
    <subcellularLocation>
        <location evidence="1">Cell membrane</location>
        <topology evidence="1">Single-pass type I membrane protein</topology>
    </subcellularLocation>
</comment>
<comment type="alternative products">
    <event type="alternative splicing"/>
    <isoform>
        <id>Q9Y5G9-1</id>
        <name>1</name>
        <sequence type="displayed"/>
    </isoform>
    <isoform>
        <id>Q9Y5G9-2</id>
        <name>2</name>
        <name>Short</name>
        <sequence type="described" ref="VSP_008665 VSP_008666"/>
    </isoform>
</comment>
<comment type="caution">
    <text evidence="6">It is uncertain whether Met-1 or Met-32 is the initiator.</text>
</comment>
<accession>Q9Y5G9</accession>
<accession>A0A087WT05</accession>
<accession>A0A087WTI2</accession>
<accession>Q9Y5D3</accession>
<keyword id="KW-0025">Alternative splicing</keyword>
<keyword id="KW-0106">Calcium</keyword>
<keyword id="KW-0130">Cell adhesion</keyword>
<keyword id="KW-1003">Cell membrane</keyword>
<keyword id="KW-0325">Glycoprotein</keyword>
<keyword id="KW-0472">Membrane</keyword>
<keyword id="KW-1267">Proteomics identification</keyword>
<keyword id="KW-1185">Reference proteome</keyword>
<keyword id="KW-0677">Repeat</keyword>
<keyword id="KW-0732">Signal</keyword>
<keyword id="KW-0812">Transmembrane</keyword>
<keyword id="KW-1133">Transmembrane helix</keyword>
<dbReference type="EMBL" id="AC005618">
    <property type="status" value="NOT_ANNOTATED_CDS"/>
    <property type="molecule type" value="Genomic_DNA"/>
</dbReference>
<dbReference type="EMBL" id="AC008781">
    <property type="status" value="NOT_ANNOTATED_CDS"/>
    <property type="molecule type" value="Genomic_DNA"/>
</dbReference>
<dbReference type="EMBL" id="KC877131">
    <property type="status" value="NOT_ANNOTATED_CDS"/>
    <property type="molecule type" value="Genomic_DNA"/>
</dbReference>
<dbReference type="EMBL" id="AF152324">
    <property type="protein sequence ID" value="AAD43718.1"/>
    <property type="molecule type" value="mRNA"/>
</dbReference>
<dbReference type="EMBL" id="AF152511">
    <property type="protein sequence ID" value="AAD43771.1"/>
    <property type="molecule type" value="mRNA"/>
</dbReference>
<dbReference type="CCDS" id="CCDS58979.2">
    <molecule id="Q9Y5G9-1"/>
</dbReference>
<dbReference type="CCDS" id="CCDS75331.1">
    <molecule id="Q9Y5G9-2"/>
</dbReference>
<dbReference type="RefSeq" id="NP_061740.2">
    <molecule id="Q9Y5G9-1"/>
    <property type="nucleotide sequence ID" value="NM_018917.4"/>
</dbReference>
<dbReference type="RefSeq" id="NP_114442.2">
    <molecule id="Q9Y5G9-2"/>
    <property type="nucleotide sequence ID" value="NM_032053.3"/>
</dbReference>
<dbReference type="SMR" id="Q9Y5G9"/>
<dbReference type="BioGRID" id="121051">
    <property type="interactions" value="37"/>
</dbReference>
<dbReference type="FunCoup" id="Q9Y5G9">
    <property type="interactions" value="11"/>
</dbReference>
<dbReference type="IntAct" id="Q9Y5G9">
    <property type="interactions" value="29"/>
</dbReference>
<dbReference type="STRING" id="9606.ENSP00000458570"/>
<dbReference type="GlyCosmos" id="Q9Y5G9">
    <property type="glycosylation" value="2 sites, No reported glycans"/>
</dbReference>
<dbReference type="GlyGen" id="Q9Y5G9">
    <property type="glycosylation" value="2 sites"/>
</dbReference>
<dbReference type="iPTMnet" id="Q9Y5G9"/>
<dbReference type="PhosphoSitePlus" id="Q9Y5G9"/>
<dbReference type="BioMuta" id="PCDHGA4"/>
<dbReference type="DMDM" id="37999839"/>
<dbReference type="jPOST" id="Q9Y5G9"/>
<dbReference type="MassIVE" id="Q9Y5G9"/>
<dbReference type="PaxDb" id="9606-ENSP00000458570"/>
<dbReference type="PeptideAtlas" id="Q9Y5G9"/>
<dbReference type="ProteomicsDB" id="86379">
    <molecule id="Q9Y5G9-1"/>
</dbReference>
<dbReference type="ProteomicsDB" id="86380">
    <molecule id="Q9Y5G9-2"/>
</dbReference>
<dbReference type="Antibodypedia" id="60162">
    <property type="antibodies" value="38 antibodies from 10 providers"/>
</dbReference>
<dbReference type="DNASU" id="56111"/>
<dbReference type="Ensembl" id="ENST00000571252.3">
    <molecule id="Q9Y5G9-1"/>
    <property type="protein sequence ID" value="ENSP00000458570.2"/>
    <property type="gene ID" value="ENSG00000262576.3"/>
</dbReference>
<dbReference type="Ensembl" id="ENST00000612927.1">
    <molecule id="Q9Y5G9-2"/>
    <property type="protein sequence ID" value="ENSP00000477894.1"/>
    <property type="gene ID" value="ENSG00000262576.3"/>
</dbReference>
<dbReference type="GeneID" id="56111"/>
<dbReference type="KEGG" id="hsa:56111"/>
<dbReference type="MANE-Select" id="ENST00000571252.3">
    <property type="protein sequence ID" value="ENSP00000458570.2"/>
    <property type="RefSeq nucleotide sequence ID" value="NM_018917.4"/>
    <property type="RefSeq protein sequence ID" value="NP_061740.2"/>
</dbReference>
<dbReference type="AGR" id="HGNC:8702"/>
<dbReference type="CTD" id="56111"/>
<dbReference type="DisGeNET" id="56111"/>
<dbReference type="GeneCards" id="PCDHGA4"/>
<dbReference type="HGNC" id="HGNC:8702">
    <property type="gene designation" value="PCDHGA4"/>
</dbReference>
<dbReference type="HPA" id="ENSG00000262576">
    <property type="expression patterns" value="Low tissue specificity"/>
</dbReference>
<dbReference type="MalaCards" id="PCDHGA4"/>
<dbReference type="MIM" id="604968">
    <property type="type" value="gene"/>
</dbReference>
<dbReference type="MIM" id="606291">
    <property type="type" value="gene"/>
</dbReference>
<dbReference type="neXtProt" id="NX_Q9Y5G9"/>
<dbReference type="OpenTargets" id="ENSG00000262576"/>
<dbReference type="PharmGKB" id="PA33050"/>
<dbReference type="VEuPathDB" id="HostDB:ENSG00000262576"/>
<dbReference type="eggNOG" id="KOG3594">
    <property type="taxonomic scope" value="Eukaryota"/>
</dbReference>
<dbReference type="GeneTree" id="ENSGT00940000163745"/>
<dbReference type="InParanoid" id="Q9Y5G9"/>
<dbReference type="OMA" id="IHITLMD"/>
<dbReference type="OrthoDB" id="6252479at2759"/>
<dbReference type="PAN-GO" id="Q9Y5G9">
    <property type="GO annotations" value="2 GO annotations based on evolutionary models"/>
</dbReference>
<dbReference type="PhylomeDB" id="Q9Y5G9"/>
<dbReference type="TreeFam" id="TF332299"/>
<dbReference type="PathwayCommons" id="Q9Y5G9"/>
<dbReference type="SignaLink" id="Q9Y5G9"/>
<dbReference type="SIGNOR" id="Q9Y5G9"/>
<dbReference type="BioGRID-ORCS" id="56111">
    <property type="hits" value="35 hits in 650 CRISPR screens"/>
</dbReference>
<dbReference type="GenomeRNAi" id="56111"/>
<dbReference type="Pharos" id="Q9Y5G9">
    <property type="development level" value="Tdark"/>
</dbReference>
<dbReference type="PRO" id="PR:Q9Y5G9"/>
<dbReference type="Proteomes" id="UP000005640">
    <property type="component" value="Chromosome 5"/>
</dbReference>
<dbReference type="RNAct" id="Q9Y5G9">
    <property type="molecule type" value="protein"/>
</dbReference>
<dbReference type="Bgee" id="ENSG00000262576">
    <property type="expression patterns" value="Expressed in primordial germ cell in gonad and 103 other cell types or tissues"/>
</dbReference>
<dbReference type="GO" id="GO:0005886">
    <property type="term" value="C:plasma membrane"/>
    <property type="evidence" value="ECO:0000318"/>
    <property type="project" value="GO_Central"/>
</dbReference>
<dbReference type="GO" id="GO:0005509">
    <property type="term" value="F:calcium ion binding"/>
    <property type="evidence" value="ECO:0007669"/>
    <property type="project" value="InterPro"/>
</dbReference>
<dbReference type="GO" id="GO:0007155">
    <property type="term" value="P:cell adhesion"/>
    <property type="evidence" value="ECO:0000318"/>
    <property type="project" value="GO_Central"/>
</dbReference>
<dbReference type="GO" id="GO:0007156">
    <property type="term" value="P:homophilic cell adhesion via plasma membrane adhesion molecules"/>
    <property type="evidence" value="ECO:0007669"/>
    <property type="project" value="InterPro"/>
</dbReference>
<dbReference type="GO" id="GO:0007399">
    <property type="term" value="P:nervous system development"/>
    <property type="evidence" value="ECO:0007669"/>
    <property type="project" value="UniProtKB-ARBA"/>
</dbReference>
<dbReference type="CDD" id="cd11304">
    <property type="entry name" value="Cadherin_repeat"/>
    <property type="match status" value="6"/>
</dbReference>
<dbReference type="FunFam" id="2.60.40.60:FF:000004">
    <property type="entry name" value="Protocadherin 1 gamma 2"/>
    <property type="match status" value="1"/>
</dbReference>
<dbReference type="FunFam" id="2.60.40.60:FF:000001">
    <property type="entry name" value="Protocadherin alpha 2"/>
    <property type="match status" value="1"/>
</dbReference>
<dbReference type="FunFam" id="2.60.40.60:FF:000002">
    <property type="entry name" value="Protocadherin alpha 2"/>
    <property type="match status" value="1"/>
</dbReference>
<dbReference type="FunFam" id="2.60.40.60:FF:000006">
    <property type="entry name" value="Protocadherin alpha 2"/>
    <property type="match status" value="1"/>
</dbReference>
<dbReference type="FunFam" id="2.60.40.60:FF:000129">
    <property type="entry name" value="protocadherin alpha-C2 isoform X1"/>
    <property type="match status" value="1"/>
</dbReference>
<dbReference type="FunFam" id="2.60.40.60:FF:000018">
    <property type="entry name" value="Protocadherin gamma c3"/>
    <property type="match status" value="1"/>
</dbReference>
<dbReference type="Gene3D" id="2.60.40.60">
    <property type="entry name" value="Cadherins"/>
    <property type="match status" value="6"/>
</dbReference>
<dbReference type="InterPro" id="IPR002126">
    <property type="entry name" value="Cadherin-like_dom"/>
</dbReference>
<dbReference type="InterPro" id="IPR015919">
    <property type="entry name" value="Cadherin-like_sf"/>
</dbReference>
<dbReference type="InterPro" id="IPR032455">
    <property type="entry name" value="Cadherin_C"/>
</dbReference>
<dbReference type="InterPro" id="IPR031904">
    <property type="entry name" value="Cadherin_CBD"/>
</dbReference>
<dbReference type="InterPro" id="IPR020894">
    <property type="entry name" value="Cadherin_CS"/>
</dbReference>
<dbReference type="InterPro" id="IPR013164">
    <property type="entry name" value="Cadherin_N"/>
</dbReference>
<dbReference type="InterPro" id="IPR050174">
    <property type="entry name" value="Protocadherin/Cadherin-CA"/>
</dbReference>
<dbReference type="PANTHER" id="PTHR24028">
    <property type="entry name" value="CADHERIN-87A"/>
    <property type="match status" value="1"/>
</dbReference>
<dbReference type="PANTHER" id="PTHR24028:SF94">
    <property type="entry name" value="PROTOCADHERIN GAMMA-A4"/>
    <property type="match status" value="1"/>
</dbReference>
<dbReference type="Pfam" id="PF00028">
    <property type="entry name" value="Cadherin"/>
    <property type="match status" value="5"/>
</dbReference>
<dbReference type="Pfam" id="PF08266">
    <property type="entry name" value="Cadherin_2"/>
    <property type="match status" value="1"/>
</dbReference>
<dbReference type="Pfam" id="PF16492">
    <property type="entry name" value="Cadherin_C_2"/>
    <property type="match status" value="1"/>
</dbReference>
<dbReference type="Pfam" id="PF15974">
    <property type="entry name" value="Cadherin_tail"/>
    <property type="match status" value="1"/>
</dbReference>
<dbReference type="PRINTS" id="PR00205">
    <property type="entry name" value="CADHERIN"/>
</dbReference>
<dbReference type="SMART" id="SM00112">
    <property type="entry name" value="CA"/>
    <property type="match status" value="6"/>
</dbReference>
<dbReference type="SUPFAM" id="SSF49313">
    <property type="entry name" value="Cadherin-like"/>
    <property type="match status" value="6"/>
</dbReference>
<dbReference type="PROSITE" id="PS00232">
    <property type="entry name" value="CADHERIN_1"/>
    <property type="match status" value="5"/>
</dbReference>
<dbReference type="PROSITE" id="PS50268">
    <property type="entry name" value="CADHERIN_2"/>
    <property type="match status" value="6"/>
</dbReference>
<sequence length="962" mass="103968">MHFILDPEDPGAPQASTEGKPKHRRLRGGVVMAAPPARPDHTRLLQICLLLGVLVEIRAEQILYSVFEEQEEGSVVGNIAKDLGLAPRELAERGVRIVSRGRTQLFALNPRSGTLVTAGRIDREELCDRSPNCVTNLEILLEDTVKILRVEVEIIDVNDNPPSFGTEQREIKVAENENPGARFPLPEAFDPDVGVNSLQGYQLNSNGYFSLDVQSGADGIKYPELVLERALDREEEAVHHLVLTAFDGGDPVRSGTARILIILVDTNDNAPVFTQPEYHVSVRENVPVGTRLLTVKATDPDEGANGDVTYSFRKVRDKISQLFQLNSLSGDITILGGLDYEDSGFYDIDVEAHDGPGLRARSKVLVTVLDENDNAPEVTVTSLTSSVQESSSPGTVIALFNVHDSDSGGNGLVTCSIPDNLPFTLEKTYGNYYRLLTHRTLDREEVSEYNITVTATDQGTPPLSTETHISLQVMDINDNPPTFPHASYSAYIPENNPRGASILSMTAQDPDSGDNARITYSLAEDTFQGAPLSSYVSINSNTGILYALCSFDYEQFRDLQLLMTASDSGDPPLSSNVSLSLFVLDQNDNVPEILYPTFPTDGSTGVELAPRSADSGYLVTKVVAVDRDSGQNAWLSYSLLKSSEPGLFAVGLHTGEVRTARALLDRDALKQRLVVVVQDHGQPPLSATVTLTVAVADSIPDVLADLGSLKPSADPDDSGLTLYLVVAVAAVSCVFLAFVTVLLALKLRRWHKSRLLHAEGSRLAGVPASHFVGVDGVRAFLQTYSHEVSLTADSRKSHLIFSQPSYADTLISRESCEKSEPLLITQDLLETKGDPNLQQAPPNTDWRFSQAQRPGTSGSQNGDDTGTWPNNQFDTEMLQAMILASASEAADGSSTLGGGAGTMGLSARYGPQFTLQHVPDYRQNVYIPGSNATLTNAAGKRDGKAPAGGNGNKKKSGKKEKK</sequence>
<proteinExistence type="evidence at protein level"/>
<name>PCDG4_HUMAN</name>